<evidence type="ECO:0000255" key="1">
    <source>
        <dbReference type="HAMAP-Rule" id="MF_01713"/>
    </source>
</evidence>
<protein>
    <recommendedName>
        <fullName evidence="1">Phosphonates import ATP-binding protein PhnC</fullName>
        <ecNumber evidence="1">7.3.2.2</ecNumber>
    </recommendedName>
</protein>
<name>PHNC_STAEQ</name>
<proteinExistence type="inferred from homology"/>
<organism>
    <name type="scientific">Staphylococcus epidermidis (strain ATCC 35984 / DSM 28319 / BCRC 17069 / CCUG 31568 / BM 3577 / RP62A)</name>
    <dbReference type="NCBI Taxonomy" id="176279"/>
    <lineage>
        <taxon>Bacteria</taxon>
        <taxon>Bacillati</taxon>
        <taxon>Bacillota</taxon>
        <taxon>Bacilli</taxon>
        <taxon>Bacillales</taxon>
        <taxon>Staphylococcaceae</taxon>
        <taxon>Staphylococcus</taxon>
    </lineage>
</organism>
<reference key="1">
    <citation type="journal article" date="2005" name="J. Bacteriol.">
        <title>Insights on evolution of virulence and resistance from the complete genome analysis of an early methicillin-resistant Staphylococcus aureus strain and a biofilm-producing methicillin-resistant Staphylococcus epidermidis strain.</title>
        <authorList>
            <person name="Gill S.R."/>
            <person name="Fouts D.E."/>
            <person name="Archer G.L."/>
            <person name="Mongodin E.F."/>
            <person name="DeBoy R.T."/>
            <person name="Ravel J."/>
            <person name="Paulsen I.T."/>
            <person name="Kolonay J.F."/>
            <person name="Brinkac L.M."/>
            <person name="Beanan M.J."/>
            <person name="Dodson R.J."/>
            <person name="Daugherty S.C."/>
            <person name="Madupu R."/>
            <person name="Angiuoli S.V."/>
            <person name="Durkin A.S."/>
            <person name="Haft D.H."/>
            <person name="Vamathevan J.J."/>
            <person name="Khouri H."/>
            <person name="Utterback T.R."/>
            <person name="Lee C."/>
            <person name="Dimitrov G."/>
            <person name="Jiang L."/>
            <person name="Qin H."/>
            <person name="Weidman J."/>
            <person name="Tran K."/>
            <person name="Kang K.H."/>
            <person name="Hance I.R."/>
            <person name="Nelson K.E."/>
            <person name="Fraser C.M."/>
        </authorList>
    </citation>
    <scope>NUCLEOTIDE SEQUENCE [LARGE SCALE GENOMIC DNA]</scope>
    <source>
        <strain>ATCC 35984 / DSM 28319 / BCRC 17069 / CCUG 31568 / BM 3577 / RP62A</strain>
    </source>
</reference>
<comment type="function">
    <text evidence="1">Part of the ABC transporter complex PhnCDE involved in phosphonates import. Responsible for energy coupling to the transport system.</text>
</comment>
<comment type="catalytic activity">
    <reaction evidence="1">
        <text>phosphonate(out) + ATP + H2O = phosphonate(in) + ADP + phosphate + H(+)</text>
        <dbReference type="Rhea" id="RHEA:18065"/>
        <dbReference type="ChEBI" id="CHEBI:15377"/>
        <dbReference type="ChEBI" id="CHEBI:15378"/>
        <dbReference type="ChEBI" id="CHEBI:16215"/>
        <dbReference type="ChEBI" id="CHEBI:30616"/>
        <dbReference type="ChEBI" id="CHEBI:43474"/>
        <dbReference type="ChEBI" id="CHEBI:456216"/>
        <dbReference type="EC" id="7.3.2.2"/>
    </reaction>
</comment>
<comment type="subunit">
    <text evidence="1">The complex is composed of two ATP-binding proteins (PhnC), two transmembrane proteins (PhnE) and a solute-binding protein (PhnD).</text>
</comment>
<comment type="subcellular location">
    <subcellularLocation>
        <location evidence="1">Cell membrane</location>
        <topology evidence="1">Peripheral membrane protein</topology>
    </subcellularLocation>
</comment>
<comment type="similarity">
    <text evidence="1">Belongs to the ABC transporter superfamily. Phosphonates importer (TC 3.A.1.9.1) family.</text>
</comment>
<accession>Q5HKQ8</accession>
<sequence>MSQIEFKDVSKVYPNGHVGLKDINLNIEKGDFAVIVGLSGAGKSTLLRSVNRLHDISKGDITIEGQSITKARGKKLLEMRRSIGMIFQHFNLVKRSTVLRNVLSGRVGYHPTWKMILGLFPKEDKVKALDALERVNILDKYDQRSDQLSGGQQQRISIARALCQEPTIILADEPVASLDPLTTKQVMDDLKKINEELGITILINLHFVDLAKEYGSRIIGLRAGELVYDGPASEANDEVFNHIYGRSIKDDEKLGVE</sequence>
<feature type="chain" id="PRO_0000092736" description="Phosphonates import ATP-binding protein PhnC">
    <location>
        <begin position="1"/>
        <end position="257"/>
    </location>
</feature>
<feature type="domain" description="ABC transporter" evidence="1">
    <location>
        <begin position="4"/>
        <end position="248"/>
    </location>
</feature>
<dbReference type="EC" id="7.3.2.2" evidence="1"/>
<dbReference type="EMBL" id="CP000029">
    <property type="protein sequence ID" value="AAW53160.1"/>
    <property type="molecule type" value="Genomic_DNA"/>
</dbReference>
<dbReference type="RefSeq" id="WP_001832011.1">
    <property type="nucleotide sequence ID" value="NC_002976.3"/>
</dbReference>
<dbReference type="SMR" id="Q5HKQ8"/>
<dbReference type="STRING" id="176279.SERP2285"/>
<dbReference type="KEGG" id="ser:SERP2285"/>
<dbReference type="eggNOG" id="COG3638">
    <property type="taxonomic scope" value="Bacteria"/>
</dbReference>
<dbReference type="HOGENOM" id="CLU_000604_1_22_9"/>
<dbReference type="Proteomes" id="UP000000531">
    <property type="component" value="Chromosome"/>
</dbReference>
<dbReference type="GO" id="GO:0005886">
    <property type="term" value="C:plasma membrane"/>
    <property type="evidence" value="ECO:0007669"/>
    <property type="project" value="UniProtKB-SubCell"/>
</dbReference>
<dbReference type="GO" id="GO:0015416">
    <property type="term" value="F:ABC-type phosphonate transporter activity"/>
    <property type="evidence" value="ECO:0007669"/>
    <property type="project" value="UniProtKB-EC"/>
</dbReference>
<dbReference type="GO" id="GO:0005524">
    <property type="term" value="F:ATP binding"/>
    <property type="evidence" value="ECO:0007669"/>
    <property type="project" value="UniProtKB-KW"/>
</dbReference>
<dbReference type="GO" id="GO:0016887">
    <property type="term" value="F:ATP hydrolysis activity"/>
    <property type="evidence" value="ECO:0007669"/>
    <property type="project" value="InterPro"/>
</dbReference>
<dbReference type="CDD" id="cd03256">
    <property type="entry name" value="ABC_PhnC_transporter"/>
    <property type="match status" value="1"/>
</dbReference>
<dbReference type="Gene3D" id="3.40.50.300">
    <property type="entry name" value="P-loop containing nucleotide triphosphate hydrolases"/>
    <property type="match status" value="1"/>
</dbReference>
<dbReference type="InterPro" id="IPR003593">
    <property type="entry name" value="AAA+_ATPase"/>
</dbReference>
<dbReference type="InterPro" id="IPR003439">
    <property type="entry name" value="ABC_transporter-like_ATP-bd"/>
</dbReference>
<dbReference type="InterPro" id="IPR017871">
    <property type="entry name" value="ABC_transporter-like_CS"/>
</dbReference>
<dbReference type="InterPro" id="IPR012693">
    <property type="entry name" value="ABC_transpr_PhnC"/>
</dbReference>
<dbReference type="InterPro" id="IPR050086">
    <property type="entry name" value="MetN_ABC_transporter-like"/>
</dbReference>
<dbReference type="InterPro" id="IPR027417">
    <property type="entry name" value="P-loop_NTPase"/>
</dbReference>
<dbReference type="NCBIfam" id="TIGR02315">
    <property type="entry name" value="ABC_phnC"/>
    <property type="match status" value="1"/>
</dbReference>
<dbReference type="PANTHER" id="PTHR43166">
    <property type="entry name" value="AMINO ACID IMPORT ATP-BINDING PROTEIN"/>
    <property type="match status" value="1"/>
</dbReference>
<dbReference type="PANTHER" id="PTHR43166:SF6">
    <property type="entry name" value="PHOSPHONATES IMPORT ATP-BINDING PROTEIN PHNC"/>
    <property type="match status" value="1"/>
</dbReference>
<dbReference type="Pfam" id="PF00005">
    <property type="entry name" value="ABC_tran"/>
    <property type="match status" value="1"/>
</dbReference>
<dbReference type="SMART" id="SM00382">
    <property type="entry name" value="AAA"/>
    <property type="match status" value="1"/>
</dbReference>
<dbReference type="SUPFAM" id="SSF52540">
    <property type="entry name" value="P-loop containing nucleoside triphosphate hydrolases"/>
    <property type="match status" value="1"/>
</dbReference>
<dbReference type="PROSITE" id="PS00211">
    <property type="entry name" value="ABC_TRANSPORTER_1"/>
    <property type="match status" value="1"/>
</dbReference>
<dbReference type="PROSITE" id="PS50893">
    <property type="entry name" value="ABC_TRANSPORTER_2"/>
    <property type="match status" value="1"/>
</dbReference>
<dbReference type="PROSITE" id="PS51249">
    <property type="entry name" value="PHNC"/>
    <property type="match status" value="1"/>
</dbReference>
<keyword id="KW-0067">ATP-binding</keyword>
<keyword id="KW-1003">Cell membrane</keyword>
<keyword id="KW-0472">Membrane</keyword>
<keyword id="KW-0547">Nucleotide-binding</keyword>
<keyword id="KW-0918">Phosphonate transport</keyword>
<keyword id="KW-1185">Reference proteome</keyword>
<keyword id="KW-1278">Translocase</keyword>
<keyword id="KW-0813">Transport</keyword>
<gene>
    <name evidence="1" type="primary">phnC</name>
    <name type="ordered locus">SERP2285</name>
</gene>